<comment type="function">
    <text evidence="3">Functions in the second step of pre-mRNA splicing. Involved in splicing intron which are longer than 200 nucleotides.</text>
</comment>
<comment type="subunit">
    <text evidence="2">Belongs to the 40S cdc5-associated complex (or cwf complex), a spliceosome sub-complex reminiscent of a late-stage spliceosome composed of the U2, U5 and U6 snRNAs and at least brr2, cdc5, cwf2/prp3, cwf3/syf1, cwf4/syf3, cwf5/ecm2, spp42/cwf6, cwf7/spf27, cwf8, cwf9, cwf10, cwf11, cwf12, prp45/cwf13, cwf14, cwf15, cwf16, cwf17, cwf18, cwf19, cwf20, cwf21, cwf22, cwf23, cwf24, cwf25, cwf26, cyp7/cwf27, cwf28, cwf29/ist3, lea1, msl1, prp5/cwf1, prp10, prp12/sap130, prp17, prp22, sap61, sap62, sap114, sap145, slu7, smb1, smd1, smd3, smf1, smg1 and syf2.</text>
</comment>
<comment type="interaction">
    <interactant intactId="EBI-538927">
        <id>O43071</id>
    </interactant>
    <interactant intactId="EBI-590830">
        <id>O14011</id>
        <label>prp19</label>
    </interactant>
    <organismsDiffer>false</organismsDiffer>
    <experiments>5</experiments>
</comment>
<comment type="subcellular location">
    <subcellularLocation>
        <location evidence="4">Nucleus</location>
    </subcellularLocation>
</comment>
<protein>
    <recommendedName>
        <fullName>Pre-mRNA-processing factor 17</fullName>
    </recommendedName>
</protein>
<reference key="1">
    <citation type="journal article" date="2002" name="Nature">
        <title>The genome sequence of Schizosaccharomyces pombe.</title>
        <authorList>
            <person name="Wood V."/>
            <person name="Gwilliam R."/>
            <person name="Rajandream M.A."/>
            <person name="Lyne M.H."/>
            <person name="Lyne R."/>
            <person name="Stewart A."/>
            <person name="Sgouros J.G."/>
            <person name="Peat N."/>
            <person name="Hayles J."/>
            <person name="Baker S.G."/>
            <person name="Basham D."/>
            <person name="Bowman S."/>
            <person name="Brooks K."/>
            <person name="Brown D."/>
            <person name="Brown S."/>
            <person name="Chillingworth T."/>
            <person name="Churcher C.M."/>
            <person name="Collins M."/>
            <person name="Connor R."/>
            <person name="Cronin A."/>
            <person name="Davis P."/>
            <person name="Feltwell T."/>
            <person name="Fraser A."/>
            <person name="Gentles S."/>
            <person name="Goble A."/>
            <person name="Hamlin N."/>
            <person name="Harris D.E."/>
            <person name="Hidalgo J."/>
            <person name="Hodgson G."/>
            <person name="Holroyd S."/>
            <person name="Hornsby T."/>
            <person name="Howarth S."/>
            <person name="Huckle E.J."/>
            <person name="Hunt S."/>
            <person name="Jagels K."/>
            <person name="James K.D."/>
            <person name="Jones L."/>
            <person name="Jones M."/>
            <person name="Leather S."/>
            <person name="McDonald S."/>
            <person name="McLean J."/>
            <person name="Mooney P."/>
            <person name="Moule S."/>
            <person name="Mungall K.L."/>
            <person name="Murphy L.D."/>
            <person name="Niblett D."/>
            <person name="Odell C."/>
            <person name="Oliver K."/>
            <person name="O'Neil S."/>
            <person name="Pearson D."/>
            <person name="Quail M.A."/>
            <person name="Rabbinowitsch E."/>
            <person name="Rutherford K.M."/>
            <person name="Rutter S."/>
            <person name="Saunders D."/>
            <person name="Seeger K."/>
            <person name="Sharp S."/>
            <person name="Skelton J."/>
            <person name="Simmonds M.N."/>
            <person name="Squares R."/>
            <person name="Squares S."/>
            <person name="Stevens K."/>
            <person name="Taylor K."/>
            <person name="Taylor R.G."/>
            <person name="Tivey A."/>
            <person name="Walsh S.V."/>
            <person name="Warren T."/>
            <person name="Whitehead S."/>
            <person name="Woodward J.R."/>
            <person name="Volckaert G."/>
            <person name="Aert R."/>
            <person name="Robben J."/>
            <person name="Grymonprez B."/>
            <person name="Weltjens I."/>
            <person name="Vanstreels E."/>
            <person name="Rieger M."/>
            <person name="Schaefer M."/>
            <person name="Mueller-Auer S."/>
            <person name="Gabel C."/>
            <person name="Fuchs M."/>
            <person name="Duesterhoeft A."/>
            <person name="Fritzc C."/>
            <person name="Holzer E."/>
            <person name="Moestl D."/>
            <person name="Hilbert H."/>
            <person name="Borzym K."/>
            <person name="Langer I."/>
            <person name="Beck A."/>
            <person name="Lehrach H."/>
            <person name="Reinhardt R."/>
            <person name="Pohl T.M."/>
            <person name="Eger P."/>
            <person name="Zimmermann W."/>
            <person name="Wedler H."/>
            <person name="Wambutt R."/>
            <person name="Purnelle B."/>
            <person name="Goffeau A."/>
            <person name="Cadieu E."/>
            <person name="Dreano S."/>
            <person name="Gloux S."/>
            <person name="Lelaure V."/>
            <person name="Mottier S."/>
            <person name="Galibert F."/>
            <person name="Aves S.J."/>
            <person name="Xiang Z."/>
            <person name="Hunt C."/>
            <person name="Moore K."/>
            <person name="Hurst S.M."/>
            <person name="Lucas M."/>
            <person name="Rochet M."/>
            <person name="Gaillardin C."/>
            <person name="Tallada V.A."/>
            <person name="Garzon A."/>
            <person name="Thode G."/>
            <person name="Daga R.R."/>
            <person name="Cruzado L."/>
            <person name="Jimenez J."/>
            <person name="Sanchez M."/>
            <person name="del Rey F."/>
            <person name="Benito J."/>
            <person name="Dominguez A."/>
            <person name="Revuelta J.L."/>
            <person name="Moreno S."/>
            <person name="Armstrong J."/>
            <person name="Forsburg S.L."/>
            <person name="Cerutti L."/>
            <person name="Lowe T."/>
            <person name="McCombie W.R."/>
            <person name="Paulsen I."/>
            <person name="Potashkin J."/>
            <person name="Shpakovski G.V."/>
            <person name="Ussery D."/>
            <person name="Barrell B.G."/>
            <person name="Nurse P."/>
        </authorList>
    </citation>
    <scope>NUCLEOTIDE SEQUENCE [LARGE SCALE GENOMIC DNA]</scope>
    <source>
        <strain>972 / ATCC 24843</strain>
    </source>
</reference>
<reference key="2">
    <citation type="journal article" date="2002" name="Mol. Cell. Biol.">
        <title>Proteomics analysis reveals stable multiprotein complexes in both fission and budding yeasts containing Myb-related Cdc5p/Cef1p, novel pre-mRNA splicing factors, and snRNAs.</title>
        <authorList>
            <person name="Ohi M.D."/>
            <person name="Link A.J."/>
            <person name="Ren L."/>
            <person name="Jennings J.L."/>
            <person name="McDonald W.H."/>
            <person name="Gould K.L."/>
        </authorList>
    </citation>
    <scope>IDENTIFICATION IN THE CWF COMPLEX</scope>
    <scope>IDENTIFICATION BY MASS SPECTROMETRY</scope>
</reference>
<reference key="3">
    <citation type="journal article" date="2004" name="J. Biol. Chem.">
        <title>Genome-wide analysis of pre-mRNA splicing: intron features govern the requirement for the second-step factor, Prp17 in Saccharomyces cerevisiae and Schizosaccharomyces pombe.</title>
        <authorList>
            <person name="Sapra A.K."/>
            <person name="Arava Y."/>
            <person name="Khandelia P."/>
            <person name="Vijayraghavan U."/>
        </authorList>
    </citation>
    <scope>FUNCTION</scope>
</reference>
<reference key="4">
    <citation type="journal article" date="2006" name="Nat. Biotechnol.">
        <title>ORFeome cloning and global analysis of protein localization in the fission yeast Schizosaccharomyces pombe.</title>
        <authorList>
            <person name="Matsuyama A."/>
            <person name="Arai R."/>
            <person name="Yashiroda Y."/>
            <person name="Shirai A."/>
            <person name="Kamata A."/>
            <person name="Sekido S."/>
            <person name="Kobayashi Y."/>
            <person name="Hashimoto A."/>
            <person name="Hamamoto M."/>
            <person name="Hiraoka Y."/>
            <person name="Horinouchi S."/>
            <person name="Yoshida M."/>
        </authorList>
    </citation>
    <scope>SUBCELLULAR LOCATION [LARGE SCALE ANALYSIS]</scope>
</reference>
<dbReference type="EMBL" id="CU329671">
    <property type="protein sequence ID" value="CAA17053.1"/>
    <property type="molecule type" value="Genomic_DNA"/>
</dbReference>
<dbReference type="PIR" id="T40651">
    <property type="entry name" value="T40651"/>
</dbReference>
<dbReference type="RefSeq" id="NP_596089.1">
    <property type="nucleotide sequence ID" value="NM_001022004.2"/>
</dbReference>
<dbReference type="PDB" id="3JB9">
    <property type="method" value="EM"/>
    <property type="resolution" value="3.60 A"/>
    <property type="chains" value="g=1-558"/>
</dbReference>
<dbReference type="PDB" id="9ESH">
    <property type="method" value="EM"/>
    <property type="resolution" value="3.20 A"/>
    <property type="chains" value="a=1-558"/>
</dbReference>
<dbReference type="PDB" id="9ESI">
    <property type="method" value="EM"/>
    <property type="resolution" value="3.10 A"/>
    <property type="chains" value="a=1-558"/>
</dbReference>
<dbReference type="PDBsum" id="3JB9"/>
<dbReference type="PDBsum" id="9ESH"/>
<dbReference type="PDBsum" id="9ESI"/>
<dbReference type="EMDB" id="EMD-19941"/>
<dbReference type="EMDB" id="EMD-19942"/>
<dbReference type="SMR" id="O43071"/>
<dbReference type="BioGRID" id="277683">
    <property type="interactions" value="87"/>
</dbReference>
<dbReference type="FunCoup" id="O43071">
    <property type="interactions" value="616"/>
</dbReference>
<dbReference type="IntAct" id="O43071">
    <property type="interactions" value="41"/>
</dbReference>
<dbReference type="STRING" id="284812.O43071"/>
<dbReference type="iPTMnet" id="O43071"/>
<dbReference type="PaxDb" id="4896-SPBC6B1.10.1"/>
<dbReference type="EnsemblFungi" id="SPBC6B1.10.1">
    <property type="protein sequence ID" value="SPBC6B1.10.1:pep"/>
    <property type="gene ID" value="SPBC6B1.10"/>
</dbReference>
<dbReference type="PomBase" id="SPBC6B1.10">
    <property type="gene designation" value="prp17"/>
</dbReference>
<dbReference type="VEuPathDB" id="FungiDB:SPBC6B1.10"/>
<dbReference type="eggNOG" id="KOG0282">
    <property type="taxonomic scope" value="Eukaryota"/>
</dbReference>
<dbReference type="HOGENOM" id="CLU_022571_2_1_1"/>
<dbReference type="InParanoid" id="O43071"/>
<dbReference type="OMA" id="EQTCYIP"/>
<dbReference type="PhylomeDB" id="O43071"/>
<dbReference type="Reactome" id="R-SPO-72163">
    <property type="pathway name" value="mRNA Splicing - Major Pathway"/>
</dbReference>
<dbReference type="EvolutionaryTrace" id="O43071"/>
<dbReference type="PRO" id="PR:O43071"/>
<dbReference type="Proteomes" id="UP000002485">
    <property type="component" value="Chromosome II"/>
</dbReference>
<dbReference type="GO" id="GO:0071013">
    <property type="term" value="C:catalytic step 2 spliceosome"/>
    <property type="evidence" value="ECO:0000318"/>
    <property type="project" value="GO_Central"/>
</dbReference>
<dbReference type="GO" id="GO:0005634">
    <property type="term" value="C:nucleus"/>
    <property type="evidence" value="ECO:0007005"/>
    <property type="project" value="PomBase"/>
</dbReference>
<dbReference type="GO" id="GO:0071014">
    <property type="term" value="C:post-mRNA release spliceosomal complex"/>
    <property type="evidence" value="ECO:0000314"/>
    <property type="project" value="PomBase"/>
</dbReference>
<dbReference type="GO" id="GO:0000974">
    <property type="term" value="C:Prp19 complex"/>
    <property type="evidence" value="ECO:0000314"/>
    <property type="project" value="PomBase"/>
</dbReference>
<dbReference type="GO" id="GO:0005681">
    <property type="term" value="C:spliceosomal complex"/>
    <property type="evidence" value="ECO:0000314"/>
    <property type="project" value="PomBase"/>
</dbReference>
<dbReference type="GO" id="GO:0003729">
    <property type="term" value="F:mRNA binding"/>
    <property type="evidence" value="ECO:0000318"/>
    <property type="project" value="GO_Central"/>
</dbReference>
<dbReference type="GO" id="GO:0045292">
    <property type="term" value="P:mRNA cis splicing, via spliceosome"/>
    <property type="evidence" value="ECO:0000315"/>
    <property type="project" value="PomBase"/>
</dbReference>
<dbReference type="GO" id="GO:0000398">
    <property type="term" value="P:mRNA splicing, via spliceosome"/>
    <property type="evidence" value="ECO:0000318"/>
    <property type="project" value="GO_Central"/>
</dbReference>
<dbReference type="CDD" id="cd00200">
    <property type="entry name" value="WD40"/>
    <property type="match status" value="1"/>
</dbReference>
<dbReference type="FunFam" id="2.130.10.10:FF:000034">
    <property type="entry name" value="Pre-mRNA-processing factor 17, putative"/>
    <property type="match status" value="1"/>
</dbReference>
<dbReference type="Gene3D" id="2.130.10.10">
    <property type="entry name" value="YVTN repeat-like/Quinoprotein amine dehydrogenase"/>
    <property type="match status" value="1"/>
</dbReference>
<dbReference type="InterPro" id="IPR020472">
    <property type="entry name" value="G-protein_beta_WD-40_rep"/>
</dbReference>
<dbReference type="InterPro" id="IPR032847">
    <property type="entry name" value="PRPF17"/>
</dbReference>
<dbReference type="InterPro" id="IPR015943">
    <property type="entry name" value="WD40/YVTN_repeat-like_dom_sf"/>
</dbReference>
<dbReference type="InterPro" id="IPR019775">
    <property type="entry name" value="WD40_repeat_CS"/>
</dbReference>
<dbReference type="InterPro" id="IPR036322">
    <property type="entry name" value="WD40_repeat_dom_sf"/>
</dbReference>
<dbReference type="InterPro" id="IPR001680">
    <property type="entry name" value="WD40_rpt"/>
</dbReference>
<dbReference type="PANTHER" id="PTHR43979">
    <property type="entry name" value="PRE-MRNA-PROCESSING FACTOR 17"/>
    <property type="match status" value="1"/>
</dbReference>
<dbReference type="PANTHER" id="PTHR43979:SF1">
    <property type="entry name" value="PRE-MRNA-PROCESSING FACTOR 17"/>
    <property type="match status" value="1"/>
</dbReference>
<dbReference type="Pfam" id="PF00400">
    <property type="entry name" value="WD40"/>
    <property type="match status" value="5"/>
</dbReference>
<dbReference type="PRINTS" id="PR00320">
    <property type="entry name" value="GPROTEINBRPT"/>
</dbReference>
<dbReference type="SMART" id="SM00320">
    <property type="entry name" value="WD40"/>
    <property type="match status" value="7"/>
</dbReference>
<dbReference type="SUPFAM" id="SSF50978">
    <property type="entry name" value="WD40 repeat-like"/>
    <property type="match status" value="1"/>
</dbReference>
<dbReference type="PROSITE" id="PS00678">
    <property type="entry name" value="WD_REPEATS_1"/>
    <property type="match status" value="1"/>
</dbReference>
<dbReference type="PROSITE" id="PS50082">
    <property type="entry name" value="WD_REPEATS_2"/>
    <property type="match status" value="4"/>
</dbReference>
<dbReference type="PROSITE" id="PS50294">
    <property type="entry name" value="WD_REPEATS_REGION"/>
    <property type="match status" value="1"/>
</dbReference>
<keyword id="KW-0002">3D-structure</keyword>
<keyword id="KW-0507">mRNA processing</keyword>
<keyword id="KW-0508">mRNA splicing</keyword>
<keyword id="KW-0539">Nucleus</keyword>
<keyword id="KW-1185">Reference proteome</keyword>
<keyword id="KW-0677">Repeat</keyword>
<keyword id="KW-0747">Spliceosome</keyword>
<keyword id="KW-0853">WD repeat</keyword>
<sequence>MLVANYSSDSEEQENSQSPNIQPLLHTENLAPAVVDNVKDDLIVSKGGNSRELARNVPVNEMVQPALGPANPFVTKEQDSIKNSITGYAEREYVPNFVFNQEYYANTHAIYGKRNFDDNEATTSTDLKRKSQKIKERREDPGDPSILEGDGAYKGPWAGYGSEQSSSPLEYSEYEEVESLDVKSEKDTESNNLGQNELLKEQLATPEVETHRSKEETILHKDRLFDYQNRSYMHVPNDVGINLSEEPGEQTCYIPKKHIFTWKGHTKGISCLRFFPISGHLLLSGSMDNQIKIWEVYHDRSLLRTFQGHARPIRDLSFSQDGRSFLSTSFDKTIKLWDTELGKCLNCFNSDRLTNCVKFQVDPDKPNEFLAGTADKRILQFDIRSPDIVQAYDHHLGGINSITFLENGKRFVTTSDDSSMRFWEYGTPVPIKFVADIAMHSMPRVALRPNGKSIACQSLDNCIYVYSAYEKYRQNKKKVFKGYSCSGYSLEVGFSPDGRFVFSGDSSGNACFWDWKTCKLMAKLPAHSGPVQSMAFHPQETSKVATSSIVDGSIKYWD</sequence>
<evidence type="ECO:0000256" key="1">
    <source>
        <dbReference type="SAM" id="MobiDB-lite"/>
    </source>
</evidence>
<evidence type="ECO:0000269" key="2">
    <source>
    </source>
</evidence>
<evidence type="ECO:0000269" key="3">
    <source>
    </source>
</evidence>
<evidence type="ECO:0000269" key="4">
    <source>
    </source>
</evidence>
<evidence type="ECO:0007829" key="5">
    <source>
        <dbReference type="PDB" id="9ESI"/>
    </source>
</evidence>
<proteinExistence type="evidence at protein level"/>
<organism>
    <name type="scientific">Schizosaccharomyces pombe (strain 972 / ATCC 24843)</name>
    <name type="common">Fission yeast</name>
    <dbReference type="NCBI Taxonomy" id="284812"/>
    <lineage>
        <taxon>Eukaryota</taxon>
        <taxon>Fungi</taxon>
        <taxon>Dikarya</taxon>
        <taxon>Ascomycota</taxon>
        <taxon>Taphrinomycotina</taxon>
        <taxon>Schizosaccharomycetes</taxon>
        <taxon>Schizosaccharomycetales</taxon>
        <taxon>Schizosaccharomycetaceae</taxon>
        <taxon>Schizosaccharomyces</taxon>
    </lineage>
</organism>
<gene>
    <name type="primary">prp17</name>
    <name type="ORF">SPBC6B1.10</name>
</gene>
<accession>O43071</accession>
<feature type="chain" id="PRO_0000278391" description="Pre-mRNA-processing factor 17">
    <location>
        <begin position="1"/>
        <end position="558"/>
    </location>
</feature>
<feature type="repeat" description="WD 1">
    <location>
        <begin position="264"/>
        <end position="304"/>
    </location>
</feature>
<feature type="repeat" description="WD 2">
    <location>
        <begin position="308"/>
        <end position="349"/>
    </location>
</feature>
<feature type="repeat" description="WD 3">
    <location>
        <begin position="351"/>
        <end position="391"/>
    </location>
</feature>
<feature type="repeat" description="WD 4">
    <location>
        <begin position="394"/>
        <end position="433"/>
    </location>
</feature>
<feature type="repeat" description="WD 5">
    <location>
        <begin position="437"/>
        <end position="476"/>
    </location>
</feature>
<feature type="repeat" description="WD 6">
    <location>
        <begin position="484"/>
        <end position="523"/>
    </location>
</feature>
<feature type="repeat" description="WD 7">
    <location>
        <begin position="526"/>
        <end position="558"/>
    </location>
</feature>
<feature type="region of interest" description="Disordered" evidence="1">
    <location>
        <begin position="1"/>
        <end position="23"/>
    </location>
</feature>
<feature type="region of interest" description="Disordered" evidence="1">
    <location>
        <begin position="117"/>
        <end position="197"/>
    </location>
</feature>
<feature type="compositionally biased region" description="Basic and acidic residues" evidence="1">
    <location>
        <begin position="126"/>
        <end position="141"/>
    </location>
</feature>
<feature type="compositionally biased region" description="Low complexity" evidence="1">
    <location>
        <begin position="162"/>
        <end position="171"/>
    </location>
</feature>
<feature type="compositionally biased region" description="Basic and acidic residues" evidence="1">
    <location>
        <begin position="180"/>
        <end position="189"/>
    </location>
</feature>
<feature type="helix" evidence="5">
    <location>
        <begin position="12"/>
        <end position="16"/>
    </location>
</feature>
<feature type="helix" evidence="5">
    <location>
        <begin position="18"/>
        <end position="27"/>
    </location>
</feature>
<feature type="turn" evidence="5">
    <location>
        <begin position="28"/>
        <end position="32"/>
    </location>
</feature>
<feature type="helix" evidence="5">
    <location>
        <begin position="33"/>
        <end position="47"/>
    </location>
</feature>
<feature type="strand" evidence="5">
    <location>
        <begin position="50"/>
        <end position="53"/>
    </location>
</feature>
<feature type="turn" evidence="5">
    <location>
        <begin position="76"/>
        <end position="79"/>
    </location>
</feature>
<feature type="strand" evidence="5">
    <location>
        <begin position="83"/>
        <end position="91"/>
    </location>
</feature>
<feature type="helix" evidence="5">
    <location>
        <begin position="96"/>
        <end position="115"/>
    </location>
</feature>
<feature type="helix" evidence="5">
    <location>
        <begin position="125"/>
        <end position="137"/>
    </location>
</feature>
<feature type="strand" evidence="5">
    <location>
        <begin position="148"/>
        <end position="152"/>
    </location>
</feature>
<name>PRP17_SCHPO</name>